<comment type="function">
    <text>Cytochrome c2 is found mainly in purple, non-sulfur, photosynthetic bacteria where it functions as the electron donor to the oxidized bacteriochlorophyll in the photophosphorylation pathway. However, it may also have a role in the respiratory chain and is found in some non-photosynthetic bacteria.</text>
</comment>
<comment type="PTM">
    <text>Binds 1 heme c group covalently per subunit.</text>
</comment>
<comment type="similarity">
    <text evidence="1">Belongs to the cytochrome c family.</text>
</comment>
<accession>P00098</accession>
<dbReference type="PIR" id="A00090">
    <property type="entry name" value="CCQF2T"/>
</dbReference>
<dbReference type="SMR" id="P00098"/>
<dbReference type="GO" id="GO:0009055">
    <property type="term" value="F:electron transfer activity"/>
    <property type="evidence" value="ECO:0007669"/>
    <property type="project" value="InterPro"/>
</dbReference>
<dbReference type="GO" id="GO:0020037">
    <property type="term" value="F:heme binding"/>
    <property type="evidence" value="ECO:0007669"/>
    <property type="project" value="InterPro"/>
</dbReference>
<dbReference type="GO" id="GO:0005506">
    <property type="term" value="F:iron ion binding"/>
    <property type="evidence" value="ECO:0007669"/>
    <property type="project" value="InterPro"/>
</dbReference>
<dbReference type="GO" id="GO:0015979">
    <property type="term" value="P:photosynthesis"/>
    <property type="evidence" value="ECO:0007669"/>
    <property type="project" value="UniProtKB-KW"/>
</dbReference>
<dbReference type="Gene3D" id="1.10.760.10">
    <property type="entry name" value="Cytochrome c-like domain"/>
    <property type="match status" value="1"/>
</dbReference>
<dbReference type="InterPro" id="IPR009056">
    <property type="entry name" value="Cyt_c-like_dom"/>
</dbReference>
<dbReference type="InterPro" id="IPR036909">
    <property type="entry name" value="Cyt_c-like_dom_sf"/>
</dbReference>
<dbReference type="InterPro" id="IPR002324">
    <property type="entry name" value="Cyt_c_ID"/>
</dbReference>
<dbReference type="Pfam" id="PF00034">
    <property type="entry name" value="Cytochrom_C"/>
    <property type="match status" value="1"/>
</dbReference>
<dbReference type="PRINTS" id="PR00606">
    <property type="entry name" value="CYTCHROMECID"/>
</dbReference>
<dbReference type="SUPFAM" id="SSF46626">
    <property type="entry name" value="Cytochrome c"/>
    <property type="match status" value="1"/>
</dbReference>
<dbReference type="PROSITE" id="PS51007">
    <property type="entry name" value="CYTC"/>
    <property type="match status" value="1"/>
</dbReference>
<name>CYC2_RHOTE</name>
<sequence>ADESALAQTKGCLACHNPEKKVVGPAYGWVAKKYAGQAGAEAKLVAKVMAGGQGVWAKQLGAEIPMPANNVTKEEATRLVKWVLSLKQIDYK</sequence>
<feature type="chain" id="PRO_0000108347" description="Cytochrome c2">
    <location>
        <begin position="1"/>
        <end position="92"/>
    </location>
</feature>
<feature type="binding site" description="covalent">
    <location>
        <position position="12"/>
    </location>
    <ligand>
        <name>heme c</name>
        <dbReference type="ChEBI" id="CHEBI:61717"/>
    </ligand>
</feature>
<feature type="binding site" description="covalent">
    <location>
        <position position="15"/>
    </location>
    <ligand>
        <name>heme c</name>
        <dbReference type="ChEBI" id="CHEBI:61717"/>
    </ligand>
</feature>
<feature type="binding site" description="axial binding residue">
    <location>
        <position position="16"/>
    </location>
    <ligand>
        <name>heme c</name>
        <dbReference type="ChEBI" id="CHEBI:61717"/>
    </ligand>
    <ligandPart>
        <name>Fe</name>
        <dbReference type="ChEBI" id="CHEBI:18248"/>
    </ligandPart>
</feature>
<feature type="binding site" description="axial binding residue">
    <location>
        <position position="66"/>
    </location>
    <ligand>
        <name>heme c</name>
        <dbReference type="ChEBI" id="CHEBI:61717"/>
    </ligand>
    <ligandPart>
        <name>Fe</name>
        <dbReference type="ChEBI" id="CHEBI:18248"/>
    </ligandPart>
</feature>
<protein>
    <recommendedName>
        <fullName>Cytochrome c2</fullName>
    </recommendedName>
</protein>
<evidence type="ECO:0000305" key="1"/>
<proteinExistence type="evidence at protein level"/>
<organism>
    <name type="scientific">Rhodocyclus tenuis</name>
    <name type="common">Rhodospirillum tenue</name>
    <dbReference type="NCBI Taxonomy" id="1066"/>
    <lineage>
        <taxon>Bacteria</taxon>
        <taxon>Pseudomonadati</taxon>
        <taxon>Pseudomonadota</taxon>
        <taxon>Betaproteobacteria</taxon>
        <taxon>Rhodocyclales</taxon>
        <taxon>Rhodocyclaceae</taxon>
        <taxon>Rhodocyclus</taxon>
    </lineage>
</organism>
<keyword id="KW-0903">Direct protein sequencing</keyword>
<keyword id="KW-0249">Electron transport</keyword>
<keyword id="KW-0349">Heme</keyword>
<keyword id="KW-0408">Iron</keyword>
<keyword id="KW-0479">Metal-binding</keyword>
<keyword id="KW-0602">Photosynthesis</keyword>
<keyword id="KW-0813">Transport</keyword>
<reference key="1">
    <citation type="journal article" date="1979" name="Nature">
        <title>Anomalies in amino acid sequences of small cytochromes c and cytochromes c' from two species of purple photosynthetic bacteria.</title>
        <authorList>
            <person name="Ambler R.P."/>
            <person name="Meyer T.E."/>
            <person name="Kamen M.D."/>
        </authorList>
    </citation>
    <scope>PROTEIN SEQUENCE</scope>
    <source>
        <strain>DSM 3761</strain>
    </source>
</reference>